<gene>
    <name evidence="1" type="primary">nuoI</name>
    <name type="ordered locus">ACIAD0738</name>
</gene>
<keyword id="KW-0004">4Fe-4S</keyword>
<keyword id="KW-0997">Cell inner membrane</keyword>
<keyword id="KW-1003">Cell membrane</keyword>
<keyword id="KW-0408">Iron</keyword>
<keyword id="KW-0411">Iron-sulfur</keyword>
<keyword id="KW-0472">Membrane</keyword>
<keyword id="KW-0479">Metal-binding</keyword>
<keyword id="KW-0520">NAD</keyword>
<keyword id="KW-0874">Quinone</keyword>
<keyword id="KW-0677">Repeat</keyword>
<keyword id="KW-1278">Translocase</keyword>
<keyword id="KW-0830">Ubiquinone</keyword>
<accession>Q6FE64</accession>
<sequence length="180" mass="20442">MYKVLAGVGSIVRTLWMVFTHITRKRDTILYPEVPAEEIVPPRYRGRIVLTRDPDGEERCVACNLCAVACPVGCISLQKAEKEDGRWYPEFFRINFSRCIFCGMCEEACPTTAIQMTPDFELGEYVRQDLVYEKENLLISGPGKYPDYNFYRVAGMAIDGKEKGQAQKESAPIDVRSLLP</sequence>
<evidence type="ECO:0000255" key="1">
    <source>
        <dbReference type="HAMAP-Rule" id="MF_01351"/>
    </source>
</evidence>
<feature type="chain" id="PRO_0000250871" description="NADH-quinone oxidoreductase subunit I">
    <location>
        <begin position="1"/>
        <end position="180"/>
    </location>
</feature>
<feature type="domain" description="4Fe-4S ferredoxin-type 1" evidence="1">
    <location>
        <begin position="50"/>
        <end position="80"/>
    </location>
</feature>
<feature type="domain" description="4Fe-4S ferredoxin-type 2" evidence="1">
    <location>
        <begin position="90"/>
        <end position="119"/>
    </location>
</feature>
<feature type="binding site" evidence="1">
    <location>
        <position position="60"/>
    </location>
    <ligand>
        <name>[4Fe-4S] cluster</name>
        <dbReference type="ChEBI" id="CHEBI:49883"/>
        <label>1</label>
    </ligand>
</feature>
<feature type="binding site" evidence="1">
    <location>
        <position position="63"/>
    </location>
    <ligand>
        <name>[4Fe-4S] cluster</name>
        <dbReference type="ChEBI" id="CHEBI:49883"/>
        <label>1</label>
    </ligand>
</feature>
<feature type="binding site" evidence="1">
    <location>
        <position position="66"/>
    </location>
    <ligand>
        <name>[4Fe-4S] cluster</name>
        <dbReference type="ChEBI" id="CHEBI:49883"/>
        <label>1</label>
    </ligand>
</feature>
<feature type="binding site" evidence="1">
    <location>
        <position position="70"/>
    </location>
    <ligand>
        <name>[4Fe-4S] cluster</name>
        <dbReference type="ChEBI" id="CHEBI:49883"/>
        <label>2</label>
    </ligand>
</feature>
<feature type="binding site" evidence="1">
    <location>
        <position position="99"/>
    </location>
    <ligand>
        <name>[4Fe-4S] cluster</name>
        <dbReference type="ChEBI" id="CHEBI:49883"/>
        <label>2</label>
    </ligand>
</feature>
<feature type="binding site" evidence="1">
    <location>
        <position position="102"/>
    </location>
    <ligand>
        <name>[4Fe-4S] cluster</name>
        <dbReference type="ChEBI" id="CHEBI:49883"/>
        <label>2</label>
    </ligand>
</feature>
<feature type="binding site" evidence="1">
    <location>
        <position position="105"/>
    </location>
    <ligand>
        <name>[4Fe-4S] cluster</name>
        <dbReference type="ChEBI" id="CHEBI:49883"/>
        <label>2</label>
    </ligand>
</feature>
<feature type="binding site" evidence="1">
    <location>
        <position position="109"/>
    </location>
    <ligand>
        <name>[4Fe-4S] cluster</name>
        <dbReference type="ChEBI" id="CHEBI:49883"/>
        <label>1</label>
    </ligand>
</feature>
<organism>
    <name type="scientific">Acinetobacter baylyi (strain ATCC 33305 / BD413 / ADP1)</name>
    <dbReference type="NCBI Taxonomy" id="62977"/>
    <lineage>
        <taxon>Bacteria</taxon>
        <taxon>Pseudomonadati</taxon>
        <taxon>Pseudomonadota</taxon>
        <taxon>Gammaproteobacteria</taxon>
        <taxon>Moraxellales</taxon>
        <taxon>Moraxellaceae</taxon>
        <taxon>Acinetobacter</taxon>
    </lineage>
</organism>
<dbReference type="EC" id="7.1.1.-" evidence="1"/>
<dbReference type="EMBL" id="CR543861">
    <property type="protein sequence ID" value="CAG67644.1"/>
    <property type="molecule type" value="Genomic_DNA"/>
</dbReference>
<dbReference type="RefSeq" id="WP_004922508.1">
    <property type="nucleotide sequence ID" value="NC_005966.1"/>
</dbReference>
<dbReference type="SMR" id="Q6FE64"/>
<dbReference type="STRING" id="202950.GCA_001485005_02494"/>
<dbReference type="GeneID" id="45233203"/>
<dbReference type="KEGG" id="aci:ACIAD0738"/>
<dbReference type="eggNOG" id="COG1143">
    <property type="taxonomic scope" value="Bacteria"/>
</dbReference>
<dbReference type="HOGENOM" id="CLU_067218_4_3_6"/>
<dbReference type="OrthoDB" id="9808559at2"/>
<dbReference type="BioCyc" id="ASP62977:ACIAD_RS03375-MONOMER"/>
<dbReference type="Proteomes" id="UP000000430">
    <property type="component" value="Chromosome"/>
</dbReference>
<dbReference type="GO" id="GO:0005886">
    <property type="term" value="C:plasma membrane"/>
    <property type="evidence" value="ECO:0007669"/>
    <property type="project" value="UniProtKB-SubCell"/>
</dbReference>
<dbReference type="GO" id="GO:0051539">
    <property type="term" value="F:4 iron, 4 sulfur cluster binding"/>
    <property type="evidence" value="ECO:0007669"/>
    <property type="project" value="UniProtKB-KW"/>
</dbReference>
<dbReference type="GO" id="GO:0005506">
    <property type="term" value="F:iron ion binding"/>
    <property type="evidence" value="ECO:0007669"/>
    <property type="project" value="UniProtKB-UniRule"/>
</dbReference>
<dbReference type="GO" id="GO:0050136">
    <property type="term" value="F:NADH:ubiquinone reductase (non-electrogenic) activity"/>
    <property type="evidence" value="ECO:0007669"/>
    <property type="project" value="UniProtKB-UniRule"/>
</dbReference>
<dbReference type="GO" id="GO:0048038">
    <property type="term" value="F:quinone binding"/>
    <property type="evidence" value="ECO:0007669"/>
    <property type="project" value="UniProtKB-KW"/>
</dbReference>
<dbReference type="GO" id="GO:0009060">
    <property type="term" value="P:aerobic respiration"/>
    <property type="evidence" value="ECO:0007669"/>
    <property type="project" value="TreeGrafter"/>
</dbReference>
<dbReference type="FunFam" id="3.30.70.3270:FF:000002">
    <property type="entry name" value="NADH-quinone oxidoreductase subunit I"/>
    <property type="match status" value="1"/>
</dbReference>
<dbReference type="Gene3D" id="3.30.70.3270">
    <property type="match status" value="1"/>
</dbReference>
<dbReference type="HAMAP" id="MF_01351">
    <property type="entry name" value="NDH1_NuoI"/>
    <property type="match status" value="1"/>
</dbReference>
<dbReference type="InterPro" id="IPR017896">
    <property type="entry name" value="4Fe4S_Fe-S-bd"/>
</dbReference>
<dbReference type="InterPro" id="IPR017900">
    <property type="entry name" value="4Fe4S_Fe_S_CS"/>
</dbReference>
<dbReference type="InterPro" id="IPR010226">
    <property type="entry name" value="NADH_quinone_OxRdtase_chainI"/>
</dbReference>
<dbReference type="NCBIfam" id="TIGR01971">
    <property type="entry name" value="NuoI"/>
    <property type="match status" value="1"/>
</dbReference>
<dbReference type="NCBIfam" id="NF004536">
    <property type="entry name" value="PRK05888.1-1"/>
    <property type="match status" value="1"/>
</dbReference>
<dbReference type="PANTHER" id="PTHR10849:SF20">
    <property type="entry name" value="NADH DEHYDROGENASE [UBIQUINONE] IRON-SULFUR PROTEIN 8, MITOCHONDRIAL"/>
    <property type="match status" value="1"/>
</dbReference>
<dbReference type="PANTHER" id="PTHR10849">
    <property type="entry name" value="NADH DEHYDROGENASE UBIQUINONE IRON-SULFUR PROTEIN 8, MITOCHONDRIAL"/>
    <property type="match status" value="1"/>
</dbReference>
<dbReference type="Pfam" id="PF12838">
    <property type="entry name" value="Fer4_7"/>
    <property type="match status" value="1"/>
</dbReference>
<dbReference type="SUPFAM" id="SSF54862">
    <property type="entry name" value="4Fe-4S ferredoxins"/>
    <property type="match status" value="1"/>
</dbReference>
<dbReference type="PROSITE" id="PS00198">
    <property type="entry name" value="4FE4S_FER_1"/>
    <property type="match status" value="2"/>
</dbReference>
<dbReference type="PROSITE" id="PS51379">
    <property type="entry name" value="4FE4S_FER_2"/>
    <property type="match status" value="2"/>
</dbReference>
<proteinExistence type="inferred from homology"/>
<name>NUOI_ACIAD</name>
<reference key="1">
    <citation type="journal article" date="2004" name="Nucleic Acids Res.">
        <title>Unique features revealed by the genome sequence of Acinetobacter sp. ADP1, a versatile and naturally transformation competent bacterium.</title>
        <authorList>
            <person name="Barbe V."/>
            <person name="Vallenet D."/>
            <person name="Fonknechten N."/>
            <person name="Kreimeyer A."/>
            <person name="Oztas S."/>
            <person name="Labarre L."/>
            <person name="Cruveiller S."/>
            <person name="Robert C."/>
            <person name="Duprat S."/>
            <person name="Wincker P."/>
            <person name="Ornston L.N."/>
            <person name="Weissenbach J."/>
            <person name="Marliere P."/>
            <person name="Cohen G.N."/>
            <person name="Medigue C."/>
        </authorList>
    </citation>
    <scope>NUCLEOTIDE SEQUENCE [LARGE SCALE GENOMIC DNA]</scope>
    <source>
        <strain>ATCC 33305 / BD413 / ADP1</strain>
    </source>
</reference>
<comment type="function">
    <text evidence="1">NDH-1 shuttles electrons from NADH, via FMN and iron-sulfur (Fe-S) centers, to quinones in the respiratory chain. The immediate electron acceptor for the enzyme in this species is believed to be ubiquinone. Couples the redox reaction to proton translocation (for every two electrons transferred, four hydrogen ions are translocated across the cytoplasmic membrane), and thus conserves the redox energy in a proton gradient.</text>
</comment>
<comment type="catalytic activity">
    <reaction evidence="1">
        <text>a quinone + NADH + 5 H(+)(in) = a quinol + NAD(+) + 4 H(+)(out)</text>
        <dbReference type="Rhea" id="RHEA:57888"/>
        <dbReference type="ChEBI" id="CHEBI:15378"/>
        <dbReference type="ChEBI" id="CHEBI:24646"/>
        <dbReference type="ChEBI" id="CHEBI:57540"/>
        <dbReference type="ChEBI" id="CHEBI:57945"/>
        <dbReference type="ChEBI" id="CHEBI:132124"/>
    </reaction>
</comment>
<comment type="cofactor">
    <cofactor evidence="1">
        <name>[4Fe-4S] cluster</name>
        <dbReference type="ChEBI" id="CHEBI:49883"/>
    </cofactor>
    <text evidence="1">Binds 2 [4Fe-4S] clusters per subunit.</text>
</comment>
<comment type="subunit">
    <text evidence="1">NDH-1 is composed of 14 different subunits. Subunits NuoA, H, J, K, L, M, N constitute the membrane sector of the complex.</text>
</comment>
<comment type="subcellular location">
    <subcellularLocation>
        <location evidence="1">Cell inner membrane</location>
        <topology evidence="1">Peripheral membrane protein</topology>
    </subcellularLocation>
</comment>
<comment type="similarity">
    <text evidence="1">Belongs to the complex I 23 kDa subunit family.</text>
</comment>
<protein>
    <recommendedName>
        <fullName evidence="1">NADH-quinone oxidoreductase subunit I</fullName>
        <ecNumber evidence="1">7.1.1.-</ecNumber>
    </recommendedName>
    <alternativeName>
        <fullName evidence="1">NADH dehydrogenase I subunit I</fullName>
    </alternativeName>
    <alternativeName>
        <fullName evidence="1">NDH-1 subunit I</fullName>
    </alternativeName>
</protein>